<protein>
    <recommendedName>
        <fullName>Fructose-bisphosphate aldolase 1</fullName>
        <shortName>FBP aldolase</shortName>
        <shortName>FBPA</shortName>
        <ecNumber>4.1.2.13</ecNumber>
    </recommendedName>
    <alternativeName>
        <fullName>Fructose-1,6-bisphosphate aldolase</fullName>
    </alternativeName>
    <alternativeName>
        <fullName>Fructose-bisphosphate aldolase I</fullName>
    </alternativeName>
</protein>
<sequence>MALITLRQLLDHAAERLQGYGVPAFNINNMEQGLAILAAARACDAPVIASRGARSYAGDIMLRHIVEALAEMYPQIPICLHQDHGNNEATCLSAIRHGFTSVMMDGSLQADMKTVASYDYNVDITRRVTDAAHWVGASVEGELGVLGSLEKGEAEAEDGSGAEGKLDHSQMLTDPDQAVEFVQATRVDALAIAMGTSHGAYKFSRKPDGEILAMRVIEEIHARLPATHLVMHGSSSVAARLQDLINAHGADMPQTYGVPVEEIERGIRHGVRKVNIDTDCRMALTGQFRKVAMESPKEFDARKFMIPAMKEMEALVRDRFERFGTAGNASKITVIPMDDMAKRYASGALDPAVATAKAA</sequence>
<accession>P27995</accession>
<comment type="function">
    <text evidence="1">Catalyzes the aldol condensation of dihydroxyacetone phosphate (DHAP or glycerone-phosphate) with glyceraldehyde 3-phosphate (G3P) to form fructose 1,6-bisphosphate (FBP) in gluconeogenesis and the reverse reaction in glycolysis.</text>
</comment>
<comment type="catalytic activity">
    <reaction>
        <text>beta-D-fructose 1,6-bisphosphate = D-glyceraldehyde 3-phosphate + dihydroxyacetone phosphate</text>
        <dbReference type="Rhea" id="RHEA:14729"/>
        <dbReference type="ChEBI" id="CHEBI:32966"/>
        <dbReference type="ChEBI" id="CHEBI:57642"/>
        <dbReference type="ChEBI" id="CHEBI:59776"/>
        <dbReference type="EC" id="4.1.2.13"/>
    </reaction>
</comment>
<comment type="cofactor">
    <cofactor evidence="1">
        <name>Zn(2+)</name>
        <dbReference type="ChEBI" id="CHEBI:29105"/>
    </cofactor>
    <text evidence="1">Binds 2 Zn(2+) ions per subunit. One is catalytic and the other provides a structural contribution.</text>
</comment>
<comment type="pathway">
    <text>Carbohydrate biosynthesis; Calvin cycle.</text>
</comment>
<comment type="pathway">
    <text>Carbohydrate degradation; glycolysis; D-glyceraldehyde 3-phosphate and glycerone phosphate from D-glucose: step 4/4.</text>
</comment>
<comment type="subunit">
    <text>Homodimer.</text>
</comment>
<comment type="miscellaneous">
    <text>This protein is encoded within the form I ribulose-bisphosphate carboxylase operon, which predominates when carbon dioxide is limiting.</text>
</comment>
<comment type="similarity">
    <text evidence="2">Belongs to the class II fructose-bisphosphate aldolase family.</text>
</comment>
<gene>
    <name type="primary">cfxA</name>
</gene>
<keyword id="KW-0113">Calvin cycle</keyword>
<keyword id="KW-0324">Glycolysis</keyword>
<keyword id="KW-0456">Lyase</keyword>
<keyword id="KW-0479">Metal-binding</keyword>
<keyword id="KW-0862">Zinc</keyword>
<dbReference type="EC" id="4.1.2.13"/>
<dbReference type="EMBL" id="M64624">
    <property type="protein sequence ID" value="AAA26114.1"/>
    <property type="molecule type" value="Genomic_DNA"/>
</dbReference>
<dbReference type="PIR" id="B40767">
    <property type="entry name" value="ADRFAS"/>
</dbReference>
<dbReference type="SMR" id="P27995"/>
<dbReference type="UniPathway" id="UPA00109">
    <property type="reaction ID" value="UER00183"/>
</dbReference>
<dbReference type="UniPathway" id="UPA00116"/>
<dbReference type="GO" id="GO:0004332">
    <property type="term" value="F:fructose-bisphosphate aldolase activity"/>
    <property type="evidence" value="ECO:0007669"/>
    <property type="project" value="UniProtKB-EC"/>
</dbReference>
<dbReference type="GO" id="GO:0008270">
    <property type="term" value="F:zinc ion binding"/>
    <property type="evidence" value="ECO:0007669"/>
    <property type="project" value="InterPro"/>
</dbReference>
<dbReference type="GO" id="GO:0006096">
    <property type="term" value="P:glycolytic process"/>
    <property type="evidence" value="ECO:0007669"/>
    <property type="project" value="UniProtKB-UniPathway"/>
</dbReference>
<dbReference type="GO" id="GO:0019253">
    <property type="term" value="P:reductive pentose-phosphate cycle"/>
    <property type="evidence" value="ECO:0007669"/>
    <property type="project" value="UniProtKB-UniPathway"/>
</dbReference>
<dbReference type="CDD" id="cd00947">
    <property type="entry name" value="TBP_aldolase_IIB"/>
    <property type="match status" value="1"/>
</dbReference>
<dbReference type="FunFam" id="3.20.20.70:FF:000111">
    <property type="entry name" value="Fructose-1,6-bisphosphate aldolase"/>
    <property type="match status" value="1"/>
</dbReference>
<dbReference type="Gene3D" id="3.20.20.70">
    <property type="entry name" value="Aldolase class I"/>
    <property type="match status" value="1"/>
</dbReference>
<dbReference type="InterPro" id="IPR013785">
    <property type="entry name" value="Aldolase_TIM"/>
</dbReference>
<dbReference type="InterPro" id="IPR050246">
    <property type="entry name" value="Class_II_FBP_aldolase"/>
</dbReference>
<dbReference type="InterPro" id="IPR000771">
    <property type="entry name" value="FBA_II"/>
</dbReference>
<dbReference type="InterPro" id="IPR006412">
    <property type="entry name" value="Fruct_bisP_Calv"/>
</dbReference>
<dbReference type="NCBIfam" id="TIGR00167">
    <property type="entry name" value="cbbA"/>
    <property type="match status" value="1"/>
</dbReference>
<dbReference type="NCBIfam" id="TIGR01521">
    <property type="entry name" value="FruBisAldo_II_B"/>
    <property type="match status" value="1"/>
</dbReference>
<dbReference type="PANTHER" id="PTHR30304">
    <property type="entry name" value="D-TAGATOSE-1,6-BISPHOSPHATE ALDOLASE"/>
    <property type="match status" value="1"/>
</dbReference>
<dbReference type="PANTHER" id="PTHR30304:SF0">
    <property type="entry name" value="D-TAGATOSE-1,6-BISPHOSPHATE ALDOLASE SUBUNIT GATY-RELATED"/>
    <property type="match status" value="1"/>
</dbReference>
<dbReference type="Pfam" id="PF01116">
    <property type="entry name" value="F_bP_aldolase"/>
    <property type="match status" value="1"/>
</dbReference>
<dbReference type="PIRSF" id="PIRSF001359">
    <property type="entry name" value="F_bP_aldolase_II"/>
    <property type="match status" value="1"/>
</dbReference>
<dbReference type="SUPFAM" id="SSF51569">
    <property type="entry name" value="Aldolase"/>
    <property type="match status" value="1"/>
</dbReference>
<dbReference type="PROSITE" id="PS00602">
    <property type="entry name" value="ALDOLASE_CLASS_II_1"/>
    <property type="match status" value="1"/>
</dbReference>
<dbReference type="PROSITE" id="PS00806">
    <property type="entry name" value="ALDOLASE_CLASS_II_2"/>
    <property type="match status" value="1"/>
</dbReference>
<organism>
    <name type="scientific">Cereibacter sphaeroides</name>
    <name type="common">Rhodobacter sphaeroides</name>
    <dbReference type="NCBI Taxonomy" id="1063"/>
    <lineage>
        <taxon>Bacteria</taxon>
        <taxon>Pseudomonadati</taxon>
        <taxon>Pseudomonadota</taxon>
        <taxon>Alphaproteobacteria</taxon>
        <taxon>Rhodobacterales</taxon>
        <taxon>Paracoccaceae</taxon>
        <taxon>Cereibacter</taxon>
    </lineage>
</organism>
<evidence type="ECO:0000250" key="1"/>
<evidence type="ECO:0000305" key="2"/>
<feature type="chain" id="PRO_0000178731" description="Fructose-bisphosphate aldolase 1">
    <location>
        <begin position="1"/>
        <end position="359"/>
    </location>
</feature>
<feature type="active site" description="Proton donor" evidence="1">
    <location>
        <position position="83"/>
    </location>
</feature>
<feature type="binding site" evidence="1">
    <location>
        <position position="50"/>
    </location>
    <ligand>
        <name>D-glyceraldehyde 3-phosphate</name>
        <dbReference type="ChEBI" id="CHEBI:59776"/>
    </ligand>
</feature>
<feature type="binding site" evidence="1">
    <location>
        <position position="84"/>
    </location>
    <ligand>
        <name>Zn(2+)</name>
        <dbReference type="ChEBI" id="CHEBI:29105"/>
        <label>1</label>
        <note>catalytic</note>
    </ligand>
</feature>
<feature type="binding site" evidence="1">
    <location>
        <position position="105"/>
    </location>
    <ligand>
        <name>Zn(2+)</name>
        <dbReference type="ChEBI" id="CHEBI:29105"/>
        <label>2</label>
    </ligand>
</feature>
<feature type="binding site" evidence="1">
    <location>
        <position position="142"/>
    </location>
    <ligand>
        <name>Zn(2+)</name>
        <dbReference type="ChEBI" id="CHEBI:29105"/>
        <label>2</label>
    </ligand>
</feature>
<feature type="binding site" evidence="1">
    <location>
        <position position="198"/>
    </location>
    <ligand>
        <name>Zn(2+)</name>
        <dbReference type="ChEBI" id="CHEBI:29105"/>
        <label>1</label>
        <note>catalytic</note>
    </ligand>
</feature>
<feature type="binding site" evidence="1">
    <location>
        <position position="199"/>
    </location>
    <ligand>
        <name>dihydroxyacetone phosphate</name>
        <dbReference type="ChEBI" id="CHEBI:57642"/>
    </ligand>
</feature>
<feature type="binding site" evidence="1">
    <location>
        <position position="232"/>
    </location>
    <ligand>
        <name>Zn(2+)</name>
        <dbReference type="ChEBI" id="CHEBI:29105"/>
        <label>1</label>
        <note>catalytic</note>
    </ligand>
</feature>
<feature type="binding site" evidence="1">
    <location>
        <begin position="233"/>
        <end position="235"/>
    </location>
    <ligand>
        <name>dihydroxyacetone phosphate</name>
        <dbReference type="ChEBI" id="CHEBI:57642"/>
    </ligand>
</feature>
<feature type="binding site" evidence="1">
    <location>
        <begin position="275"/>
        <end position="278"/>
    </location>
    <ligand>
        <name>dihydroxyacetone phosphate</name>
        <dbReference type="ChEBI" id="CHEBI:57642"/>
    </ligand>
</feature>
<name>ALF1_CERSP</name>
<proteinExistence type="inferred from homology"/>
<reference key="1">
    <citation type="journal article" date="1991" name="J. Biol. Chem.">
        <title>Nucleotide sequence, transcriptional analysis, and expression of genes encoded within the form I CO2 fixation operon of Rhodobacter sphaeroides.</title>
        <authorList>
            <person name="Gibson J.L."/>
            <person name="Falcone D.L."/>
            <person name="Tabita F.R."/>
        </authorList>
    </citation>
    <scope>NUCLEOTIDE SEQUENCE [GENOMIC DNA]</scope>
</reference>